<keyword id="KW-1185">Reference proteome</keyword>
<keyword id="KW-0687">Ribonucleoprotein</keyword>
<keyword id="KW-0689">Ribosomal protein</keyword>
<feature type="chain" id="PRO_1000079789" description="Large ribosomal subunit protein bL12">
    <location>
        <begin position="1"/>
        <end position="120"/>
    </location>
</feature>
<comment type="function">
    <text evidence="1">Forms part of the ribosomal stalk which helps the ribosome interact with GTP-bound translation factors. Is thus essential for accurate translation.</text>
</comment>
<comment type="subunit">
    <text evidence="1">Homodimer. Part of the ribosomal stalk of the 50S ribosomal subunit. Forms a multimeric L10(L12)X complex, where L10 forms an elongated spine to which 2 to 4 L12 dimers bind in a sequential fashion. Binds GTP-bound translation factors.</text>
</comment>
<comment type="similarity">
    <text evidence="1">Belongs to the bacterial ribosomal protein bL12 family.</text>
</comment>
<dbReference type="EMBL" id="CP000885">
    <property type="protein sequence ID" value="ABX44037.1"/>
    <property type="molecule type" value="Genomic_DNA"/>
</dbReference>
<dbReference type="RefSeq" id="WP_012201685.1">
    <property type="nucleotide sequence ID" value="NC_010001.1"/>
</dbReference>
<dbReference type="SMR" id="A9KJL7"/>
<dbReference type="STRING" id="357809.Cphy_3690"/>
<dbReference type="KEGG" id="cpy:Cphy_3690"/>
<dbReference type="eggNOG" id="COG0222">
    <property type="taxonomic scope" value="Bacteria"/>
</dbReference>
<dbReference type="HOGENOM" id="CLU_086499_3_2_9"/>
<dbReference type="OrthoDB" id="9811748at2"/>
<dbReference type="Proteomes" id="UP000000370">
    <property type="component" value="Chromosome"/>
</dbReference>
<dbReference type="GO" id="GO:0022625">
    <property type="term" value="C:cytosolic large ribosomal subunit"/>
    <property type="evidence" value="ECO:0007669"/>
    <property type="project" value="TreeGrafter"/>
</dbReference>
<dbReference type="GO" id="GO:0003729">
    <property type="term" value="F:mRNA binding"/>
    <property type="evidence" value="ECO:0007669"/>
    <property type="project" value="TreeGrafter"/>
</dbReference>
<dbReference type="GO" id="GO:0003735">
    <property type="term" value="F:structural constituent of ribosome"/>
    <property type="evidence" value="ECO:0007669"/>
    <property type="project" value="InterPro"/>
</dbReference>
<dbReference type="GO" id="GO:0006412">
    <property type="term" value="P:translation"/>
    <property type="evidence" value="ECO:0007669"/>
    <property type="project" value="UniProtKB-UniRule"/>
</dbReference>
<dbReference type="CDD" id="cd00387">
    <property type="entry name" value="Ribosomal_L7_L12"/>
    <property type="match status" value="1"/>
</dbReference>
<dbReference type="FunFam" id="3.30.1390.10:FF:000001">
    <property type="entry name" value="50S ribosomal protein L7/L12"/>
    <property type="match status" value="1"/>
</dbReference>
<dbReference type="Gene3D" id="3.30.1390.10">
    <property type="match status" value="1"/>
</dbReference>
<dbReference type="Gene3D" id="1.20.5.710">
    <property type="entry name" value="Single helix bin"/>
    <property type="match status" value="1"/>
</dbReference>
<dbReference type="HAMAP" id="MF_00368">
    <property type="entry name" value="Ribosomal_bL12"/>
    <property type="match status" value="1"/>
</dbReference>
<dbReference type="InterPro" id="IPR000206">
    <property type="entry name" value="Ribosomal_bL12"/>
</dbReference>
<dbReference type="InterPro" id="IPR013823">
    <property type="entry name" value="Ribosomal_bL12_C"/>
</dbReference>
<dbReference type="InterPro" id="IPR014719">
    <property type="entry name" value="Ribosomal_bL12_C/ClpS-like"/>
</dbReference>
<dbReference type="InterPro" id="IPR008932">
    <property type="entry name" value="Ribosomal_bL12_oligo"/>
</dbReference>
<dbReference type="InterPro" id="IPR036235">
    <property type="entry name" value="Ribosomal_bL12_oligo_N_sf"/>
</dbReference>
<dbReference type="NCBIfam" id="TIGR00855">
    <property type="entry name" value="L12"/>
    <property type="match status" value="1"/>
</dbReference>
<dbReference type="PANTHER" id="PTHR45987">
    <property type="entry name" value="39S RIBOSOMAL PROTEIN L12"/>
    <property type="match status" value="1"/>
</dbReference>
<dbReference type="PANTHER" id="PTHR45987:SF4">
    <property type="entry name" value="LARGE RIBOSOMAL SUBUNIT PROTEIN BL12M"/>
    <property type="match status" value="1"/>
</dbReference>
<dbReference type="Pfam" id="PF00542">
    <property type="entry name" value="Ribosomal_L12"/>
    <property type="match status" value="1"/>
</dbReference>
<dbReference type="Pfam" id="PF16320">
    <property type="entry name" value="Ribosomal_L12_N"/>
    <property type="match status" value="1"/>
</dbReference>
<dbReference type="SUPFAM" id="SSF54736">
    <property type="entry name" value="ClpS-like"/>
    <property type="match status" value="1"/>
</dbReference>
<dbReference type="SUPFAM" id="SSF48300">
    <property type="entry name" value="Ribosomal protein L7/12, oligomerisation (N-terminal) domain"/>
    <property type="match status" value="1"/>
</dbReference>
<name>RL7_LACP7</name>
<evidence type="ECO:0000255" key="1">
    <source>
        <dbReference type="HAMAP-Rule" id="MF_00368"/>
    </source>
</evidence>
<evidence type="ECO:0000305" key="2"/>
<proteinExistence type="inferred from homology"/>
<reference key="1">
    <citation type="submission" date="2007-11" db="EMBL/GenBank/DDBJ databases">
        <title>Complete genome sequence of Clostridium phytofermentans ISDg.</title>
        <authorList>
            <person name="Leschine S.B."/>
            <person name="Warnick T.A."/>
            <person name="Blanchard J.L."/>
            <person name="Schnell D.J."/>
            <person name="Petit E.L."/>
            <person name="LaTouf W.G."/>
            <person name="Copeland A."/>
            <person name="Lucas S."/>
            <person name="Lapidus A."/>
            <person name="Barry K."/>
            <person name="Glavina del Rio T."/>
            <person name="Dalin E."/>
            <person name="Tice H."/>
            <person name="Pitluck S."/>
            <person name="Kiss H."/>
            <person name="Brettin T."/>
            <person name="Bruce D."/>
            <person name="Detter J.C."/>
            <person name="Han C."/>
            <person name="Kuske C."/>
            <person name="Schmutz J."/>
            <person name="Larimer F."/>
            <person name="Land M."/>
            <person name="Hauser L."/>
            <person name="Kyrpides N."/>
            <person name="Kim E.A."/>
            <person name="Richardson P."/>
        </authorList>
    </citation>
    <scope>NUCLEOTIDE SEQUENCE [LARGE SCALE GENOMIC DNA]</scope>
    <source>
        <strain>ATCC 700394 / DSM 18823 / ISDg</strain>
    </source>
</reference>
<organism>
    <name type="scientific">Lachnoclostridium phytofermentans (strain ATCC 700394 / DSM 18823 / ISDg)</name>
    <name type="common">Clostridium phytofermentans</name>
    <dbReference type="NCBI Taxonomy" id="357809"/>
    <lineage>
        <taxon>Bacteria</taxon>
        <taxon>Bacillati</taxon>
        <taxon>Bacillota</taxon>
        <taxon>Clostridia</taxon>
        <taxon>Lachnospirales</taxon>
        <taxon>Lachnospiraceae</taxon>
    </lineage>
</organism>
<accession>A9KJL7</accession>
<protein>
    <recommendedName>
        <fullName evidence="1">Large ribosomal subunit protein bL12</fullName>
    </recommendedName>
    <alternativeName>
        <fullName evidence="2">50S ribosomal protein L7/L12</fullName>
    </alternativeName>
</protein>
<sequence length="120" mass="12543">MTTQEFIDAIKGMTVLELNDLVKACEEEFGVSAAAGVVVAAAGPAEAAEEKTEFDVELTDVGANKVKVIKVVREVTGLGLKEAKDVVDGAPKVLKEAASKEEADDIKAKLEAEGAKVTLK</sequence>
<gene>
    <name evidence="1" type="primary">rplL</name>
    <name type="ordered locus">Cphy_3690</name>
</gene>